<accession>Q8K9N4</accession>
<proteinExistence type="inferred from homology"/>
<keyword id="KW-0479">Metal-binding</keyword>
<name>GCH1L_BUCAP</name>
<evidence type="ECO:0000250" key="1">
    <source>
        <dbReference type="UniProtKB" id="P0AFP6"/>
    </source>
</evidence>
<evidence type="ECO:0000305" key="2"/>
<sequence length="247" mass="28348">MENFLLEKIINKKLSSDQYSDVVPNGLQIEGEKIIKKIITGVTACQELLDKALSYGANAIIVHHGYFWKNESQCIHNMTRKRLTTILSNNINLYSWHIPLDIHPKLGNNAQIAKKLNIRIKGYILPYLFWGTLEENINAFDFSKKIEKKYEKKPIHIYANAPIYISRIAWCSGRGQNFIKQAYNFGIDAFLTGEISEETMHIAKELGIHFFSIGHHATEKDGIKSLGKWLNNKYDLDVTFIDIHNPA</sequence>
<feature type="chain" id="PRO_0000147298" description="GTP cyclohydrolase 1 type 2 homolog">
    <location>
        <begin position="1"/>
        <end position="247"/>
    </location>
</feature>
<feature type="binding site" evidence="1">
    <location>
        <position position="63"/>
    </location>
    <ligand>
        <name>a divalent metal cation</name>
        <dbReference type="ChEBI" id="CHEBI:60240"/>
        <label>1</label>
    </ligand>
</feature>
<feature type="binding site" evidence="1">
    <location>
        <position position="64"/>
    </location>
    <ligand>
        <name>a divalent metal cation</name>
        <dbReference type="ChEBI" id="CHEBI:60240"/>
        <label>2</label>
    </ligand>
</feature>
<feature type="binding site" evidence="1">
    <location>
        <position position="101"/>
    </location>
    <ligand>
        <name>a divalent metal cation</name>
        <dbReference type="ChEBI" id="CHEBI:60240"/>
        <label>1</label>
    </ligand>
</feature>
<feature type="binding site" evidence="1">
    <location>
        <position position="215"/>
    </location>
    <ligand>
        <name>a divalent metal cation</name>
        <dbReference type="ChEBI" id="CHEBI:60240"/>
        <label>2</label>
    </ligand>
</feature>
<feature type="binding site" evidence="1">
    <location>
        <position position="219"/>
    </location>
    <ligand>
        <name>a divalent metal cation</name>
        <dbReference type="ChEBI" id="CHEBI:60240"/>
        <label>1</label>
    </ligand>
</feature>
<feature type="binding site" evidence="1">
    <location>
        <position position="219"/>
    </location>
    <ligand>
        <name>a divalent metal cation</name>
        <dbReference type="ChEBI" id="CHEBI:60240"/>
        <label>2</label>
    </ligand>
</feature>
<dbReference type="EMBL" id="AE013218">
    <property type="protein sequence ID" value="AAM67846.1"/>
    <property type="molecule type" value="Genomic_DNA"/>
</dbReference>
<dbReference type="RefSeq" id="WP_011053813.1">
    <property type="nucleotide sequence ID" value="NC_004061.1"/>
</dbReference>
<dbReference type="SMR" id="Q8K9N4"/>
<dbReference type="STRING" id="198804.BUsg_291"/>
<dbReference type="GeneID" id="93003761"/>
<dbReference type="KEGG" id="bas:BUsg_291"/>
<dbReference type="eggNOG" id="COG0327">
    <property type="taxonomic scope" value="Bacteria"/>
</dbReference>
<dbReference type="HOGENOM" id="CLU_037423_3_0_6"/>
<dbReference type="Proteomes" id="UP000000416">
    <property type="component" value="Chromosome"/>
</dbReference>
<dbReference type="GO" id="GO:0005737">
    <property type="term" value="C:cytoplasm"/>
    <property type="evidence" value="ECO:0007669"/>
    <property type="project" value="TreeGrafter"/>
</dbReference>
<dbReference type="GO" id="GO:0046872">
    <property type="term" value="F:metal ion binding"/>
    <property type="evidence" value="ECO:0007669"/>
    <property type="project" value="UniProtKB-KW"/>
</dbReference>
<dbReference type="FunFam" id="3.40.1390.30:FF:000002">
    <property type="entry name" value="Nif3-like dinuclear metal center protein"/>
    <property type="match status" value="1"/>
</dbReference>
<dbReference type="Gene3D" id="3.40.1390.30">
    <property type="entry name" value="NIF3 (NGG1p interacting factor 3)-like"/>
    <property type="match status" value="2"/>
</dbReference>
<dbReference type="InterPro" id="IPR002678">
    <property type="entry name" value="DUF34/NIF3"/>
</dbReference>
<dbReference type="InterPro" id="IPR036069">
    <property type="entry name" value="DUF34/NIF3_sf"/>
</dbReference>
<dbReference type="NCBIfam" id="TIGR00486">
    <property type="entry name" value="YbgI_SA1388"/>
    <property type="match status" value="1"/>
</dbReference>
<dbReference type="PANTHER" id="PTHR13799:SF14">
    <property type="entry name" value="GTP CYCLOHYDROLASE 1 TYPE 2 HOMOLOG"/>
    <property type="match status" value="1"/>
</dbReference>
<dbReference type="PANTHER" id="PTHR13799">
    <property type="entry name" value="NGG1 INTERACTING FACTOR 3"/>
    <property type="match status" value="1"/>
</dbReference>
<dbReference type="Pfam" id="PF01784">
    <property type="entry name" value="DUF34_NIF3"/>
    <property type="match status" value="1"/>
</dbReference>
<dbReference type="SUPFAM" id="SSF102705">
    <property type="entry name" value="NIF3 (NGG1p interacting factor 3)-like"/>
    <property type="match status" value="1"/>
</dbReference>
<comment type="subunit">
    <text evidence="1">Homohexamer.</text>
</comment>
<comment type="similarity">
    <text evidence="2">Belongs to the GTP cyclohydrolase I type 2/NIF3 family.</text>
</comment>
<reference key="1">
    <citation type="journal article" date="2002" name="Science">
        <title>50 million years of genomic stasis in endosymbiotic bacteria.</title>
        <authorList>
            <person name="Tamas I."/>
            <person name="Klasson L."/>
            <person name="Canbaeck B."/>
            <person name="Naeslund A.K."/>
            <person name="Eriksson A.-S."/>
            <person name="Wernegreen J.J."/>
            <person name="Sandstroem J.P."/>
            <person name="Moran N.A."/>
            <person name="Andersson S.G.E."/>
        </authorList>
    </citation>
    <scope>NUCLEOTIDE SEQUENCE [LARGE SCALE GENOMIC DNA]</scope>
    <source>
        <strain>Sg</strain>
    </source>
</reference>
<organism>
    <name type="scientific">Buchnera aphidicola subsp. Schizaphis graminum (strain Sg)</name>
    <dbReference type="NCBI Taxonomy" id="198804"/>
    <lineage>
        <taxon>Bacteria</taxon>
        <taxon>Pseudomonadati</taxon>
        <taxon>Pseudomonadota</taxon>
        <taxon>Gammaproteobacteria</taxon>
        <taxon>Enterobacterales</taxon>
        <taxon>Erwiniaceae</taxon>
        <taxon>Buchnera</taxon>
    </lineage>
</organism>
<protein>
    <recommendedName>
        <fullName>GTP cyclohydrolase 1 type 2 homolog</fullName>
    </recommendedName>
</protein>
<gene>
    <name type="ordered locus">BUsg_291</name>
</gene>